<keyword id="KW-0004">4Fe-4S</keyword>
<keyword id="KW-0408">Iron</keyword>
<keyword id="KW-0411">Iron-sulfur</keyword>
<keyword id="KW-0472">Membrane</keyword>
<keyword id="KW-0479">Metal-binding</keyword>
<keyword id="KW-0520">NAD</keyword>
<keyword id="KW-0521">NADP</keyword>
<keyword id="KW-0618">Plastoquinone</keyword>
<keyword id="KW-0874">Quinone</keyword>
<keyword id="KW-1185">Reference proteome</keyword>
<keyword id="KW-0793">Thylakoid</keyword>
<keyword id="KW-1278">Translocase</keyword>
<keyword id="KW-0813">Transport</keyword>
<accession>B1XMK4</accession>
<accession>Q8KX39</accession>
<protein>
    <recommendedName>
        <fullName evidence="1">NAD(P)H-quinone oxidoreductase subunit K</fullName>
        <ecNumber evidence="1">7.1.1.-</ecNumber>
    </recommendedName>
    <alternativeName>
        <fullName evidence="1">NAD(P)H dehydrogenase I subunit K</fullName>
    </alternativeName>
    <alternativeName>
        <fullName evidence="1">NDH-1 subunit K</fullName>
        <shortName evidence="1">NDH-K</shortName>
    </alternativeName>
</protein>
<name>NDHK_PICP2</name>
<gene>
    <name evidence="1" type="primary">ndhK</name>
    <name type="ordered locus">SYNPCC7002_A2749</name>
</gene>
<comment type="function">
    <text evidence="1">NDH-1 shuttles electrons from an unknown electron donor, via FMN and iron-sulfur (Fe-S) centers, to quinones in the respiratory and/or the photosynthetic chain. The immediate electron acceptor for the enzyme in this species is believed to be plastoquinone. Couples the redox reaction to proton translocation, and thus conserves the redox energy in a proton gradient. Cyanobacterial NDH-1 also plays a role in inorganic carbon-concentration.</text>
</comment>
<comment type="catalytic activity">
    <reaction evidence="1">
        <text>a plastoquinone + NADH + (n+1) H(+)(in) = a plastoquinol + NAD(+) + n H(+)(out)</text>
        <dbReference type="Rhea" id="RHEA:42608"/>
        <dbReference type="Rhea" id="RHEA-COMP:9561"/>
        <dbReference type="Rhea" id="RHEA-COMP:9562"/>
        <dbReference type="ChEBI" id="CHEBI:15378"/>
        <dbReference type="ChEBI" id="CHEBI:17757"/>
        <dbReference type="ChEBI" id="CHEBI:57540"/>
        <dbReference type="ChEBI" id="CHEBI:57945"/>
        <dbReference type="ChEBI" id="CHEBI:62192"/>
    </reaction>
</comment>
<comment type="catalytic activity">
    <reaction evidence="1">
        <text>a plastoquinone + NADPH + (n+1) H(+)(in) = a plastoquinol + NADP(+) + n H(+)(out)</text>
        <dbReference type="Rhea" id="RHEA:42612"/>
        <dbReference type="Rhea" id="RHEA-COMP:9561"/>
        <dbReference type="Rhea" id="RHEA-COMP:9562"/>
        <dbReference type="ChEBI" id="CHEBI:15378"/>
        <dbReference type="ChEBI" id="CHEBI:17757"/>
        <dbReference type="ChEBI" id="CHEBI:57783"/>
        <dbReference type="ChEBI" id="CHEBI:58349"/>
        <dbReference type="ChEBI" id="CHEBI:62192"/>
    </reaction>
</comment>
<comment type="cofactor">
    <cofactor evidence="1">
        <name>[4Fe-4S] cluster</name>
        <dbReference type="ChEBI" id="CHEBI:49883"/>
    </cofactor>
    <text evidence="1">Binds 1 [4Fe-4S] cluster.</text>
</comment>
<comment type="subunit">
    <text evidence="1">NDH-1 can be composed of about 15 different subunits; different subcomplexes with different compositions have been identified which probably have different functions.</text>
</comment>
<comment type="subcellular location">
    <subcellularLocation>
        <location evidence="1">Cellular thylakoid membrane</location>
        <topology evidence="1">Peripheral membrane protein</topology>
        <orientation evidence="1">Cytoplasmic side</orientation>
    </subcellularLocation>
</comment>
<comment type="similarity">
    <text evidence="1">Belongs to the complex I 20 kDa subunit family.</text>
</comment>
<comment type="sequence caution" evidence="2">
    <conflict type="erroneous initiation">
        <sequence resource="EMBL-CDS" id="AAN03554"/>
    </conflict>
</comment>
<reference key="1">
    <citation type="submission" date="2001-05" db="EMBL/GenBank/DDBJ databases">
        <title>An analysis of forty genes encoding electron transport proteins from Synechococcus sp. PCC 7002: a comparative study of electron transport proteins from cyanobacteria and chloroplasts.</title>
        <authorList>
            <person name="Nomura C.T."/>
            <person name="Persson S."/>
            <person name="Zhao J."/>
            <person name="Bryant D.A."/>
        </authorList>
    </citation>
    <scope>NUCLEOTIDE SEQUENCE [GENOMIC DNA]</scope>
</reference>
<reference key="2">
    <citation type="submission" date="2008-02" db="EMBL/GenBank/DDBJ databases">
        <title>Complete sequence of Synechococcus sp. PCC 7002.</title>
        <authorList>
            <person name="Li T."/>
            <person name="Zhao J."/>
            <person name="Zhao C."/>
            <person name="Liu Z."/>
            <person name="Zhao F."/>
            <person name="Marquardt J."/>
            <person name="Nomura C.T."/>
            <person name="Persson S."/>
            <person name="Detter J.C."/>
            <person name="Richardson P.M."/>
            <person name="Lanz C."/>
            <person name="Schuster S.C."/>
            <person name="Wang J."/>
            <person name="Li S."/>
            <person name="Huang X."/>
            <person name="Cai T."/>
            <person name="Yu Z."/>
            <person name="Luo J."/>
            <person name="Zhao J."/>
            <person name="Bryant D.A."/>
        </authorList>
    </citation>
    <scope>NUCLEOTIDE SEQUENCE [LARGE SCALE GENOMIC DNA]</scope>
    <source>
        <strain>ATCC 27264 / PCC 7002 / PR-6</strain>
    </source>
</reference>
<proteinExistence type="inferred from homology"/>
<feature type="chain" id="PRO_0000358491" description="NAD(P)H-quinone oxidoreductase subunit K">
    <location>
        <begin position="1"/>
        <end position="243"/>
    </location>
</feature>
<feature type="binding site" evidence="1">
    <location>
        <position position="59"/>
    </location>
    <ligand>
        <name>[4Fe-4S] cluster</name>
        <dbReference type="ChEBI" id="CHEBI:49883"/>
    </ligand>
</feature>
<feature type="binding site" evidence="1">
    <location>
        <position position="60"/>
    </location>
    <ligand>
        <name>[4Fe-4S] cluster</name>
        <dbReference type="ChEBI" id="CHEBI:49883"/>
    </ligand>
</feature>
<feature type="binding site" evidence="1">
    <location>
        <position position="124"/>
    </location>
    <ligand>
        <name>[4Fe-4S] cluster</name>
        <dbReference type="ChEBI" id="CHEBI:49883"/>
    </ligand>
</feature>
<feature type="binding site" evidence="1">
    <location>
        <position position="155"/>
    </location>
    <ligand>
        <name>[4Fe-4S] cluster</name>
        <dbReference type="ChEBI" id="CHEBI:49883"/>
    </ligand>
</feature>
<evidence type="ECO:0000255" key="1">
    <source>
        <dbReference type="HAMAP-Rule" id="MF_01356"/>
    </source>
</evidence>
<evidence type="ECO:0000305" key="2"/>
<sequence length="243" mass="27106">MVMNPTSFEQQQTEKLLNPMGRSQVTQDLSENVILTTVDDLYNWARLSSLWPLLYGTACCFIEFAALLGSRFDFDRFGLVPRSSPRQADLILVAGTVTMKMAPALVRLYEEMPEPKYVIAMGACTITGGMFSSDSTTAVRGVDKLIPVDLYIPGCPPRPEAIIDAIIKLRKKVSNETIQERSLKTEQTHRYYSTAHSMKVVEPILTGKYLGMDTWNNPPKELTEAMGMPVPPALLTAKQREEA</sequence>
<organism>
    <name type="scientific">Picosynechococcus sp. (strain ATCC 27264 / PCC 7002 / PR-6)</name>
    <name type="common">Agmenellum quadruplicatum</name>
    <dbReference type="NCBI Taxonomy" id="32049"/>
    <lineage>
        <taxon>Bacteria</taxon>
        <taxon>Bacillati</taxon>
        <taxon>Cyanobacteriota</taxon>
        <taxon>Cyanophyceae</taxon>
        <taxon>Oscillatoriophycideae</taxon>
        <taxon>Chroococcales</taxon>
        <taxon>Geminocystaceae</taxon>
        <taxon>Picosynechococcus</taxon>
    </lineage>
</organism>
<dbReference type="EC" id="7.1.1.-" evidence="1"/>
<dbReference type="EMBL" id="AF381040">
    <property type="protein sequence ID" value="AAN03554.1"/>
    <property type="status" value="ALT_INIT"/>
    <property type="molecule type" value="Genomic_DNA"/>
</dbReference>
<dbReference type="EMBL" id="CP000951">
    <property type="protein sequence ID" value="ACB00723.1"/>
    <property type="molecule type" value="Genomic_DNA"/>
</dbReference>
<dbReference type="RefSeq" id="WP_012308341.1">
    <property type="nucleotide sequence ID" value="NZ_JAHHPU010000003.1"/>
</dbReference>
<dbReference type="SMR" id="B1XMK4"/>
<dbReference type="STRING" id="32049.SYNPCC7002_A2749"/>
<dbReference type="KEGG" id="syp:SYNPCC7002_A2749"/>
<dbReference type="eggNOG" id="COG0377">
    <property type="taxonomic scope" value="Bacteria"/>
</dbReference>
<dbReference type="HOGENOM" id="CLU_055737_2_1_3"/>
<dbReference type="Proteomes" id="UP000001688">
    <property type="component" value="Chromosome"/>
</dbReference>
<dbReference type="GO" id="GO:0031676">
    <property type="term" value="C:plasma membrane-derived thylakoid membrane"/>
    <property type="evidence" value="ECO:0007669"/>
    <property type="project" value="UniProtKB-SubCell"/>
</dbReference>
<dbReference type="GO" id="GO:0045271">
    <property type="term" value="C:respiratory chain complex I"/>
    <property type="evidence" value="ECO:0007669"/>
    <property type="project" value="TreeGrafter"/>
</dbReference>
<dbReference type="GO" id="GO:0051539">
    <property type="term" value="F:4 iron, 4 sulfur cluster binding"/>
    <property type="evidence" value="ECO:0007669"/>
    <property type="project" value="UniProtKB-KW"/>
</dbReference>
<dbReference type="GO" id="GO:0005506">
    <property type="term" value="F:iron ion binding"/>
    <property type="evidence" value="ECO:0007669"/>
    <property type="project" value="UniProtKB-UniRule"/>
</dbReference>
<dbReference type="GO" id="GO:0008137">
    <property type="term" value="F:NADH dehydrogenase (ubiquinone) activity"/>
    <property type="evidence" value="ECO:0007669"/>
    <property type="project" value="InterPro"/>
</dbReference>
<dbReference type="GO" id="GO:0048038">
    <property type="term" value="F:quinone binding"/>
    <property type="evidence" value="ECO:0007669"/>
    <property type="project" value="UniProtKB-KW"/>
</dbReference>
<dbReference type="GO" id="GO:0009060">
    <property type="term" value="P:aerobic respiration"/>
    <property type="evidence" value="ECO:0007669"/>
    <property type="project" value="TreeGrafter"/>
</dbReference>
<dbReference type="GO" id="GO:0015990">
    <property type="term" value="P:electron transport coupled proton transport"/>
    <property type="evidence" value="ECO:0007669"/>
    <property type="project" value="TreeGrafter"/>
</dbReference>
<dbReference type="GO" id="GO:0019684">
    <property type="term" value="P:photosynthesis, light reaction"/>
    <property type="evidence" value="ECO:0007669"/>
    <property type="project" value="UniProtKB-UniRule"/>
</dbReference>
<dbReference type="FunFam" id="3.40.50.12280:FF:000003">
    <property type="entry name" value="NAD(P)H-quinone oxidoreductase subunit K, chloroplastic"/>
    <property type="match status" value="1"/>
</dbReference>
<dbReference type="Gene3D" id="3.40.50.12280">
    <property type="match status" value="1"/>
</dbReference>
<dbReference type="HAMAP" id="MF_01356">
    <property type="entry name" value="NDH1_NuoB"/>
    <property type="match status" value="1"/>
</dbReference>
<dbReference type="InterPro" id="IPR006137">
    <property type="entry name" value="NADH_UbQ_OxRdtase-like_20kDa"/>
</dbReference>
<dbReference type="InterPro" id="IPR006138">
    <property type="entry name" value="NADH_UQ_OxRdtase_20Kd_su"/>
</dbReference>
<dbReference type="NCBIfam" id="TIGR01957">
    <property type="entry name" value="nuoB_fam"/>
    <property type="match status" value="1"/>
</dbReference>
<dbReference type="NCBIfam" id="NF005012">
    <property type="entry name" value="PRK06411.1"/>
    <property type="match status" value="1"/>
</dbReference>
<dbReference type="PANTHER" id="PTHR11995">
    <property type="entry name" value="NADH DEHYDROGENASE"/>
    <property type="match status" value="1"/>
</dbReference>
<dbReference type="PANTHER" id="PTHR11995:SF14">
    <property type="entry name" value="NADH DEHYDROGENASE [UBIQUINONE] IRON-SULFUR PROTEIN 7, MITOCHONDRIAL"/>
    <property type="match status" value="1"/>
</dbReference>
<dbReference type="Pfam" id="PF01058">
    <property type="entry name" value="Oxidored_q6"/>
    <property type="match status" value="1"/>
</dbReference>
<dbReference type="SUPFAM" id="SSF56770">
    <property type="entry name" value="HydA/Nqo6-like"/>
    <property type="match status" value="1"/>
</dbReference>
<dbReference type="PROSITE" id="PS01150">
    <property type="entry name" value="COMPLEX1_20K"/>
    <property type="match status" value="1"/>
</dbReference>